<proteinExistence type="evidence at transcript level"/>
<accession>P28200</accession>
<feature type="chain" id="PRO_0000094896" description="Tyrosine-protein phosphatase 8">
    <location>
        <begin position="1" status="less than"/>
        <end position="112" status="greater than"/>
    </location>
</feature>
<feature type="domain" description="Tyrosine-protein phosphatase" evidence="1">
    <location>
        <begin position="1" status="less than"/>
        <end position="112" status="greater than"/>
    </location>
</feature>
<feature type="non-terminal residue">
    <location>
        <position position="1"/>
    </location>
</feature>
<feature type="non-terminal residue">
    <location>
        <position position="112"/>
    </location>
</feature>
<organism>
    <name type="scientific">Styela plicata</name>
    <name type="common">Wrinkled sea squirt</name>
    <name type="synonym">Ascidia plicata</name>
    <dbReference type="NCBI Taxonomy" id="7726"/>
    <lineage>
        <taxon>Eukaryota</taxon>
        <taxon>Metazoa</taxon>
        <taxon>Chordata</taxon>
        <taxon>Tunicata</taxon>
        <taxon>Ascidiacea</taxon>
        <taxon>Stolidobranchia</taxon>
        <taxon>Styelidae</taxon>
        <taxon>Styela</taxon>
    </lineage>
</organism>
<keyword id="KW-0378">Hydrolase</keyword>
<keyword id="KW-0904">Protein phosphatase</keyword>
<protein>
    <recommendedName>
        <fullName>Tyrosine-protein phosphatase 8</fullName>
        <ecNumber>3.1.3.48</ecNumber>
    </recommendedName>
</protein>
<gene>
    <name type="primary">STY-8</name>
</gene>
<comment type="catalytic activity">
    <reaction evidence="2">
        <text>O-phospho-L-tyrosyl-[protein] + H2O = L-tyrosyl-[protein] + phosphate</text>
        <dbReference type="Rhea" id="RHEA:10684"/>
        <dbReference type="Rhea" id="RHEA-COMP:10136"/>
        <dbReference type="Rhea" id="RHEA-COMP:20101"/>
        <dbReference type="ChEBI" id="CHEBI:15377"/>
        <dbReference type="ChEBI" id="CHEBI:43474"/>
        <dbReference type="ChEBI" id="CHEBI:46858"/>
        <dbReference type="ChEBI" id="CHEBI:61978"/>
        <dbReference type="EC" id="3.1.3.48"/>
    </reaction>
</comment>
<comment type="similarity">
    <text evidence="3">Belongs to the protein-tyrosine phosphatase family.</text>
</comment>
<sequence>ENSTAIVMITKLKERKEKCSEYMPLKCGEKHTYENFEIEIKNVRNADHYTVRTIEVRNTEEDNATHTVYHYWYAEWLDHDTPEKLRGLLTLIQEVGLRCPDIANSEYGPVVV</sequence>
<reference key="1">
    <citation type="journal article" date="1991" name="Immunogenetics">
        <title>Protein tyrosine phosphatase domains from the protochordate Styela plicata.</title>
        <authorList>
            <person name="Matthews R.J."/>
            <person name="Flores E."/>
            <person name="Thomas M.L."/>
        </authorList>
    </citation>
    <scope>NUCLEOTIDE SEQUENCE [MRNA]</scope>
</reference>
<name>PTP8_STYPL</name>
<evidence type="ECO:0000255" key="1">
    <source>
        <dbReference type="PROSITE-ProRule" id="PRU00160"/>
    </source>
</evidence>
<evidence type="ECO:0000255" key="2">
    <source>
        <dbReference type="PROSITE-ProRule" id="PRU10044"/>
    </source>
</evidence>
<evidence type="ECO:0000305" key="3"/>
<dbReference type="EC" id="3.1.3.48"/>
<dbReference type="EMBL" id="M37993">
    <property type="protein sequence ID" value="AAA29826.1"/>
    <property type="molecule type" value="mRNA"/>
</dbReference>
<dbReference type="SMR" id="P28200"/>
<dbReference type="GO" id="GO:0030054">
    <property type="term" value="C:cell junction"/>
    <property type="evidence" value="ECO:0007669"/>
    <property type="project" value="TreeGrafter"/>
</dbReference>
<dbReference type="GO" id="GO:0005829">
    <property type="term" value="C:cytosol"/>
    <property type="evidence" value="ECO:0007669"/>
    <property type="project" value="TreeGrafter"/>
</dbReference>
<dbReference type="GO" id="GO:0005886">
    <property type="term" value="C:plasma membrane"/>
    <property type="evidence" value="ECO:0007669"/>
    <property type="project" value="TreeGrafter"/>
</dbReference>
<dbReference type="GO" id="GO:0019901">
    <property type="term" value="F:protein kinase binding"/>
    <property type="evidence" value="ECO:0007669"/>
    <property type="project" value="TreeGrafter"/>
</dbReference>
<dbReference type="GO" id="GO:0004725">
    <property type="term" value="F:protein tyrosine phosphatase activity"/>
    <property type="evidence" value="ECO:0007669"/>
    <property type="project" value="UniProtKB-EC"/>
</dbReference>
<dbReference type="GO" id="GO:0007165">
    <property type="term" value="P:signal transduction"/>
    <property type="evidence" value="ECO:0007669"/>
    <property type="project" value="TreeGrafter"/>
</dbReference>
<dbReference type="Gene3D" id="3.90.190.10">
    <property type="entry name" value="Protein tyrosine phosphatase superfamily"/>
    <property type="match status" value="1"/>
</dbReference>
<dbReference type="InterPro" id="IPR029021">
    <property type="entry name" value="Prot-tyrosine_phosphatase-like"/>
</dbReference>
<dbReference type="InterPro" id="IPR000242">
    <property type="entry name" value="PTP_cat"/>
</dbReference>
<dbReference type="InterPro" id="IPR008356">
    <property type="entry name" value="Tyr_Pase_KIM-con"/>
</dbReference>
<dbReference type="PANTHER" id="PTHR46198">
    <property type="entry name" value="PROTEIN-TYROSINE-PHOSPHATASE"/>
    <property type="match status" value="1"/>
</dbReference>
<dbReference type="PANTHER" id="PTHR46198:SF3">
    <property type="entry name" value="PROTEIN-TYROSINE-PHOSPHATASE"/>
    <property type="match status" value="1"/>
</dbReference>
<dbReference type="Pfam" id="PF00102">
    <property type="entry name" value="Y_phosphatase"/>
    <property type="match status" value="1"/>
</dbReference>
<dbReference type="SUPFAM" id="SSF52799">
    <property type="entry name" value="(Phosphotyrosine protein) phosphatases II"/>
    <property type="match status" value="1"/>
</dbReference>
<dbReference type="PROSITE" id="PS50055">
    <property type="entry name" value="TYR_PHOSPHATASE_PTP"/>
    <property type="match status" value="1"/>
</dbReference>